<protein>
    <recommendedName>
        <fullName evidence="11">Avirulence protein ATR1</fullName>
    </recommendedName>
    <alternativeName>
        <fullName evidence="11">Arabidopsis thaliana recognized protein 1</fullName>
    </alternativeName>
</protein>
<proteinExistence type="evidence at protein level"/>
<sequence length="311" mass="35102">MRVCYFVLVPSVALAVIATESSETSGTIVHVFPLRDVADHRNDALINRALRAQTALDDDEERWPFGPSAVEALIETIDRHGRVSLNDEAKMKKVVRTWKKLIERDDLIGEIGKHYFEAPGPLHDTYDEALATRLVTTYSDRGVARAILHTRPSDPLSKKAGQAHRLEEAVASLWKGRGYTSDNVVSSIATGHDVDFFAPTAFTFLVKCVESEDDANNAIFEYFGSNPSRYFSAVLHAMEKPDADSRVLESSKKWMFQCYAQKQFPTPVFERTLAAYQSEDYAIRGARNHYEKLSLSQIEELVEEYSRIYSV</sequence>
<feature type="signal peptide" evidence="1">
    <location>
        <begin position="1"/>
        <end position="15"/>
    </location>
</feature>
<feature type="chain" id="PRO_5012000082" description="Avirulence protein ATR1">
    <location>
        <begin position="16"/>
        <end position="311"/>
    </location>
</feature>
<feature type="region of interest" description="WY domain 1" evidence="14">
    <location>
        <begin position="127"/>
        <end position="209"/>
    </location>
</feature>
<feature type="region of interest" description="WY domain 2" evidence="14">
    <location>
        <begin position="210"/>
        <end position="311"/>
    </location>
</feature>
<feature type="short sequence motif" description="RxLR-dEER" evidence="13">
    <location>
        <begin position="48"/>
        <end position="62"/>
    </location>
</feature>
<feature type="helix" evidence="16">
    <location>
        <begin position="69"/>
        <end position="82"/>
    </location>
</feature>
<feature type="helix" evidence="16">
    <location>
        <begin position="87"/>
        <end position="103"/>
    </location>
</feature>
<feature type="strand" evidence="16">
    <location>
        <begin position="104"/>
        <end position="107"/>
    </location>
</feature>
<feature type="helix" evidence="16">
    <location>
        <begin position="108"/>
        <end position="117"/>
    </location>
</feature>
<feature type="strand" evidence="17">
    <location>
        <begin position="118"/>
        <end position="121"/>
    </location>
</feature>
<feature type="helix" evidence="16">
    <location>
        <begin position="127"/>
        <end position="150"/>
    </location>
</feature>
<feature type="helix" evidence="16">
    <location>
        <begin position="160"/>
        <end position="177"/>
    </location>
</feature>
<feature type="helix" evidence="16">
    <location>
        <begin position="181"/>
        <end position="188"/>
    </location>
</feature>
<feature type="helix" evidence="16">
    <location>
        <begin position="193"/>
        <end position="197"/>
    </location>
</feature>
<feature type="helix" evidence="16">
    <location>
        <begin position="199"/>
        <end position="209"/>
    </location>
</feature>
<feature type="helix" evidence="16">
    <location>
        <begin position="212"/>
        <end position="222"/>
    </location>
</feature>
<feature type="turn" evidence="16">
    <location>
        <begin position="223"/>
        <end position="225"/>
    </location>
</feature>
<feature type="helix" evidence="16">
    <location>
        <begin position="227"/>
        <end position="239"/>
    </location>
</feature>
<feature type="helix" evidence="16">
    <location>
        <begin position="245"/>
        <end position="261"/>
    </location>
</feature>
<feature type="helix" evidence="16">
    <location>
        <begin position="266"/>
        <end position="275"/>
    </location>
</feature>
<feature type="helix" evidence="16">
    <location>
        <begin position="295"/>
        <end position="308"/>
    </location>
</feature>
<accession>M4B6G6</accession>
<accession>Q4VKJ6</accession>
<evidence type="ECO:0000255" key="1"/>
<evidence type="ECO:0000269" key="2">
    <source>
    </source>
</evidence>
<evidence type="ECO:0000269" key="3">
    <source>
    </source>
</evidence>
<evidence type="ECO:0000269" key="4">
    <source>
    </source>
</evidence>
<evidence type="ECO:0000269" key="5">
    <source>
    </source>
</evidence>
<evidence type="ECO:0000269" key="6">
    <source>
    </source>
</evidence>
<evidence type="ECO:0000269" key="7">
    <source>
    </source>
</evidence>
<evidence type="ECO:0000269" key="8">
    <source>
    </source>
</evidence>
<evidence type="ECO:0000269" key="9">
    <source>
    </source>
</evidence>
<evidence type="ECO:0000269" key="10">
    <source>
    </source>
</evidence>
<evidence type="ECO:0000303" key="11">
    <source>
    </source>
</evidence>
<evidence type="ECO:0000305" key="12"/>
<evidence type="ECO:0000305" key="13">
    <source>
    </source>
</evidence>
<evidence type="ECO:0000305" key="14">
    <source>
    </source>
</evidence>
<evidence type="ECO:0007744" key="15">
    <source>
        <dbReference type="PDB" id="3RMR"/>
    </source>
</evidence>
<evidence type="ECO:0007829" key="16">
    <source>
        <dbReference type="PDB" id="3RMR"/>
    </source>
</evidence>
<evidence type="ECO:0007829" key="17">
    <source>
        <dbReference type="PDB" id="7CRC"/>
    </source>
</evidence>
<keyword id="KW-0002">3D-structure</keyword>
<keyword id="KW-1035">Host cytoplasm</keyword>
<keyword id="KW-1185">Reference proteome</keyword>
<keyword id="KW-0677">Repeat</keyword>
<keyword id="KW-0964">Secreted</keyword>
<keyword id="KW-0732">Signal</keyword>
<keyword id="KW-0843">Virulence</keyword>
<name>ATR1_HYAAE</name>
<organism>
    <name type="scientific">Hyaloperonospora arabidopsidis (strain Emoy2)</name>
    <name type="common">Downy mildew agent</name>
    <name type="synonym">Peronospora arabidopsidis</name>
    <dbReference type="NCBI Taxonomy" id="559515"/>
    <lineage>
        <taxon>Eukaryota</taxon>
        <taxon>Sar</taxon>
        <taxon>Stramenopiles</taxon>
        <taxon>Oomycota</taxon>
        <taxon>Peronosporales</taxon>
        <taxon>Peronosporaceae</taxon>
        <taxon>Hyaloperonospora</taxon>
    </lineage>
</organism>
<gene>
    <name evidence="11" type="primary">ATR1</name>
    <name evidence="11" type="synonym">ATR1-NdWsB</name>
</gene>
<comment type="function">
    <text evidence="2 5 7 8 9 10">Secreted effector that acts as an elicitor of hypersensitive response (HR) specifically on plants carrying both defense protein RPP1 from several ecotypes including RPP1-NdA, RPP1-WsB, RPP1-EstA and RPP1-ZdrA.</text>
</comment>
<comment type="subunit">
    <text evidence="4 7 8">Monomer (PubMed:21788488). Interacts with defense protein RPP1 from several ecotypes including RPP1-NdA, RPP1-WsB, RPP1-EstA and RPP1-ZdrA, via their leucine-rich repeats (LLRs) (PubMed:25671309, PubMed:26725254).</text>
</comment>
<comment type="subcellular location">
    <subcellularLocation>
        <location evidence="2">Secreted</location>
    </subcellularLocation>
    <subcellularLocation>
        <location evidence="2">Host cytoplasm</location>
    </subcellularLocation>
</comment>
<comment type="domain">
    <text evidence="3 6 13">The RxLR-dEER motif acts to carry the protein into the host cell cytoplasm through binding to cell surface phosphatidylinositol-3-phosphate (PIP). However ATR1 does not bind to PIPs, even though it harbors the RxLR-dEER motif at the N-terminus, suggesting that the RxLR-dEER motif is insufficient for PIP binding.</text>
</comment>
<comment type="domain">
    <text evidence="4 8">The tandem repeated WY domains are involved in the recognition of the RPP1 defense proteins of the different Arabidopsis thaliana ecotypes.</text>
</comment>
<comment type="miscellaneous">
    <text evidence="2 5 7 8">The ATR1 effector protein of Hyaloperonospora arabidopsidis is a polymorphic member of the RXLR class of secreted effectors. The ATR1 alleles are differentially recognized by RPP1 genes from different Arabidopsis ecotypes (Niederzenz, Wassilewskija, Estland and Zdarec).</text>
</comment>
<comment type="similarity">
    <text evidence="12">Belongs to the RxLR effector family.</text>
</comment>
<reference key="1">
    <citation type="journal article" date="2005" name="Plant Cell">
        <title>Differential recognition of highly divergent downy mildew avirulence gene alleles by RPP1 resistance genes from two Arabidopsis lines.</title>
        <authorList>
            <person name="Rehmany A.P."/>
            <person name="Gordon A."/>
            <person name="Rose L.E."/>
            <person name="Allen R.L."/>
            <person name="Armstrong M.R."/>
            <person name="Whisson S.C."/>
            <person name="Kamoun S."/>
            <person name="Tyler B.M."/>
            <person name="Birch P.R."/>
            <person name="Beynon J.L."/>
        </authorList>
    </citation>
    <scope>NUCLEOTIDE SEQUENCE [GENOMIC DNA]</scope>
    <scope>FUNCTION</scope>
    <scope>SUBCELLULAR LOCATION</scope>
    <scope>DOMAIN</scope>
    <source>
        <strain>Emoy2</strain>
        <strain>Hiks1</strain>
        <strain>Waco5</strain>
    </source>
</reference>
<reference key="2">
    <citation type="journal article" date="2010" name="Science">
        <title>Signatures of adaptation to obligate biotrophy in the Hyaloperonospora arabidopsidis genome.</title>
        <authorList>
            <person name="Baxter L."/>
            <person name="Tripathy S."/>
            <person name="Ishaque N."/>
            <person name="Boot N."/>
            <person name="Cabral A."/>
            <person name="Kemen E."/>
            <person name="Thines M."/>
            <person name="Ah-Fong A."/>
            <person name="Anderson R."/>
            <person name="Badejoko W."/>
            <person name="Bittner-Eddy P."/>
            <person name="Boore J.L."/>
            <person name="Chibucos M.C."/>
            <person name="Coates M."/>
            <person name="Dehal P."/>
            <person name="Delehaunty K."/>
            <person name="Dong S."/>
            <person name="Downton P."/>
            <person name="Dumas B."/>
            <person name="Fabro G."/>
            <person name="Fronick C."/>
            <person name="Fuerstenberg S.I."/>
            <person name="Fulton L."/>
            <person name="Gaulin E."/>
            <person name="Govers F."/>
            <person name="Hughes L."/>
            <person name="Humphray S."/>
            <person name="Jiang R.H."/>
            <person name="Judelson H."/>
            <person name="Kamoun S."/>
            <person name="Kyung K."/>
            <person name="Meijer H."/>
            <person name="Minx P."/>
            <person name="Morris P."/>
            <person name="Nelson J."/>
            <person name="Phuntumart V."/>
            <person name="Qutob D."/>
            <person name="Rehmany A."/>
            <person name="Rougon-Cardoso A."/>
            <person name="Ryden P."/>
            <person name="Torto-Alalibo T."/>
            <person name="Studholme D."/>
            <person name="Wang Y."/>
            <person name="Win J."/>
            <person name="Wood J."/>
            <person name="Clifton S.W."/>
            <person name="Rogers J."/>
            <person name="Van den Ackerveken G."/>
            <person name="Jones J.D."/>
            <person name="McDowell J.M."/>
            <person name="Beynon J."/>
            <person name="Tyler B.M."/>
        </authorList>
    </citation>
    <scope>NUCLEOTIDE SEQUENCE [LARGE SCALE GENOMIC DNA]</scope>
    <source>
        <strain>Emoy2</strain>
    </source>
</reference>
<reference key="3">
    <citation type="submission" date="2015-06" db="UniProtKB">
        <authorList>
            <consortium name="EnsemblProtists"/>
        </authorList>
    </citation>
    <scope>IDENTIFICATION</scope>
    <source>
        <strain>Emoy2</strain>
    </source>
</reference>
<reference key="4">
    <citation type="journal article" date="2008" name="Microbiology">
        <title>Plasmodium falciparum and Hyaloperonospora parasitica effector translocation motifs are functional in Phytophthora infestans.</title>
        <authorList>
            <person name="Grouffaud S."/>
            <person name="van West P."/>
            <person name="Avrova A.O."/>
            <person name="Birch P.R."/>
            <person name="Whisson S.C."/>
        </authorList>
    </citation>
    <scope>DOMAIN</scope>
</reference>
<reference key="5">
    <citation type="journal article" date="2011" name="PLoS ONE">
        <title>Global analysis of Arabidopsis/downy mildew interactions reveals prevalence of incomplete resistance and rapid evolution of pathogen recognition.</title>
        <authorList>
            <person name="Krasileva K.V."/>
            <person name="Zheng C."/>
            <person name="Leonelli L."/>
            <person name="Goritschnig S."/>
            <person name="Dahlbeck D."/>
            <person name="Staskawicz B.J."/>
        </authorList>
    </citation>
    <scope>FUNCTION</scope>
</reference>
<reference key="6">
    <citation type="journal article" date="2013" name="Plant Signal. Behav.">
        <title>The RXLR motif of oomycete effectors is not a sufficient element for binding to phosphatidylinositol monophosphates.</title>
        <authorList>
            <person name="Yaeno T."/>
            <person name="Shirasu K."/>
        </authorList>
    </citation>
    <scope>DOMAIN</scope>
</reference>
<reference key="7">
    <citation type="journal article" date="2015" name="PLoS Pathog.">
        <title>Recognition and activation domains contribute to allele-specific responses of an Arabidopsis NLR receptor to an oomycete effector protein.</title>
        <authorList>
            <person name="Steinbrenner A.D."/>
            <person name="Goritschnig S."/>
            <person name="Staskawicz B.J."/>
        </authorList>
    </citation>
    <scope>FUNCTION</scope>
    <scope>INTERACTION WITH RPP1-NDA AND RPP1-WSB</scope>
</reference>
<reference key="8">
    <citation type="journal article" date="2016" name="New Phytol.">
        <title>Structurally distinct Arabidopsis thaliana NLR immune receptors recognize tandem WY domains of an oomycete effector.</title>
        <authorList>
            <person name="Goritschnig S."/>
            <person name="Steinbrenner A.D."/>
            <person name="Grunwald D.J."/>
            <person name="Staskawicz B.J."/>
        </authorList>
    </citation>
    <scope>FUNCTION</scope>
    <scope>INTERACTION WITH RPP1-ESTA AND RPP1-ZDRA</scope>
    <scope>DOMAIN</scope>
</reference>
<reference key="9">
    <citation type="journal article" date="2016" name="PLoS Pathog.">
        <title>Multiple domain associations within the Arabidopsis immune receptor RPP1 regulate the activation of programmed cell death.</title>
        <authorList>
            <person name="Schreiber K.J."/>
            <person name="Bentham A."/>
            <person name="Williams S.J."/>
            <person name="Kobe B."/>
            <person name="Staskawicz B.J."/>
        </authorList>
    </citation>
    <scope>FUNCTION</scope>
</reference>
<reference key="10">
    <citation type="journal article" date="2018" name="Plant Physiol.">
        <title>NLR mutations suppressing immune hybrid incompatibility and their effects on disease resistance.</title>
        <authorList>
            <person name="Atanasov K.E."/>
            <person name="Liu C."/>
            <person name="Erban A."/>
            <person name="Kopka J."/>
            <person name="Parker J.E."/>
            <person name="Alcazar R."/>
        </authorList>
    </citation>
    <scope>FUNCTION</scope>
</reference>
<reference evidence="15" key="11">
    <citation type="journal article" date="2011" name="Proc. Natl. Acad. Sci. U.S.A.">
        <title>Hyaloperonospora arabidopsidis ATR1 effector is a repeat protein with distributed recognition surfaces.</title>
        <authorList>
            <person name="Chou S."/>
            <person name="Krasileva K.V."/>
            <person name="Holton J.M."/>
            <person name="Steinbrenner A.D."/>
            <person name="Alber T."/>
            <person name="Staskawicz B.J."/>
        </authorList>
    </citation>
    <scope>X-RAY CRYSTALLOGRAPHY (2.30 ANGSTROMS) OF 52-311</scope>
    <scope>FUNCTION</scope>
    <scope>SUBUNIT</scope>
    <scope>DOMAIN</scope>
</reference>
<dbReference type="EMBL" id="AY842877">
    <property type="protein sequence ID" value="AAX51198.1"/>
    <property type="molecule type" value="Genomic_DNA"/>
</dbReference>
<dbReference type="EMBL" id="AH014899">
    <property type="protein sequence ID" value="AAY58904.1"/>
    <property type="molecule type" value="Genomic_DNA"/>
</dbReference>
<dbReference type="EMBL" id="AY973540">
    <property type="protein sequence ID" value="AAY58900.1"/>
    <property type="molecule type" value="Genomic_DNA"/>
</dbReference>
<dbReference type="EMBL" id="AY842879">
    <property type="protein sequence ID" value="AAX51200.1"/>
    <property type="molecule type" value="Genomic_DNA"/>
</dbReference>
<dbReference type="EMBL" id="AY842878">
    <property type="protein sequence ID" value="AAX51199.1"/>
    <property type="molecule type" value="Genomic_DNA"/>
</dbReference>
<dbReference type="EMBL" id="JH598543">
    <property type="status" value="NOT_ANNOTATED_CDS"/>
    <property type="molecule type" value="Genomic_DNA"/>
</dbReference>
<dbReference type="PDB" id="3RMR">
    <property type="method" value="X-ray"/>
    <property type="resolution" value="2.30 A"/>
    <property type="chains" value="A/B/C=52-311"/>
</dbReference>
<dbReference type="PDB" id="7CRB">
    <property type="method" value="EM"/>
    <property type="resolution" value="3.16 A"/>
    <property type="chains" value="J=1-311"/>
</dbReference>
<dbReference type="PDB" id="7CRC">
    <property type="method" value="EM"/>
    <property type="resolution" value="3.02 A"/>
    <property type="chains" value="E/F/G/H=1-311"/>
</dbReference>
<dbReference type="PDBsum" id="3RMR"/>
<dbReference type="PDBsum" id="7CRB"/>
<dbReference type="PDBsum" id="7CRC"/>
<dbReference type="EMDB" id="EMD-30449"/>
<dbReference type="EMDB" id="EMD-30450"/>
<dbReference type="SMR" id="M4B6G6"/>
<dbReference type="EnsemblProtists" id="HpaT801867">
    <property type="protein sequence ID" value="HpaP801867"/>
    <property type="gene ID" value="HpaG801867"/>
</dbReference>
<dbReference type="VEuPathDB" id="FungiDB:HpaG801867"/>
<dbReference type="HOGENOM" id="CLU_895597_0_0_1"/>
<dbReference type="InParanoid" id="M4B6G6"/>
<dbReference type="EvolutionaryTrace" id="M4B6G6"/>
<dbReference type="PHI-base" id="PHI:2420"/>
<dbReference type="PHI-base" id="PHI:4253"/>
<dbReference type="PHI-base" id="PHI:4254"/>
<dbReference type="PHI-base" id="PHI:4255"/>
<dbReference type="PHI-base" id="PHI:4256"/>
<dbReference type="PHI-base" id="PHI:4257"/>
<dbReference type="PHI-base" id="PHI:531"/>
<dbReference type="Proteomes" id="UP000011713">
    <property type="component" value="Unassembled WGS sequence"/>
</dbReference>
<dbReference type="GO" id="GO:0005576">
    <property type="term" value="C:extracellular region"/>
    <property type="evidence" value="ECO:0007669"/>
    <property type="project" value="UniProtKB-SubCell"/>
</dbReference>
<dbReference type="GO" id="GO:0030430">
    <property type="term" value="C:host cell cytoplasm"/>
    <property type="evidence" value="ECO:0000314"/>
    <property type="project" value="PHI-base"/>
</dbReference>
<dbReference type="GO" id="GO:0042025">
    <property type="term" value="C:host cell nucleus"/>
    <property type="evidence" value="ECO:0000314"/>
    <property type="project" value="PHI-base"/>
</dbReference>
<dbReference type="GO" id="GO:0140418">
    <property type="term" value="P:effector-mediated perturbation of host process by symbiont"/>
    <property type="evidence" value="ECO:0000315"/>
    <property type="project" value="PHI-base"/>
</dbReference>
<dbReference type="Gene3D" id="1.20.5.2710">
    <property type="match status" value="1"/>
</dbReference>
<dbReference type="InterPro" id="IPR053992">
    <property type="entry name" value="ATR1_N"/>
</dbReference>
<dbReference type="InterPro" id="IPR048935">
    <property type="entry name" value="ATR1_WY-dom"/>
</dbReference>
<dbReference type="Pfam" id="PF22223">
    <property type="entry name" value="ATR1_N"/>
    <property type="match status" value="1"/>
</dbReference>
<dbReference type="Pfam" id="PF21421">
    <property type="entry name" value="ATR1_WY-dom"/>
    <property type="match status" value="2"/>
</dbReference>